<sequence>MNSTTKENKETIRPVFPFTAIVGQEEMKLALILNVIDPKIGGVMIMGDRGTGKSTTIRAIADLLPKIEVVKDDLFNSHPMDVDLMSDENKKTLQDGVALTTSYINVPMVDLPLGATEDRVCGTIDIEKALTEGIKTFEPGLLAKANRGILYVDEVNLLDDHLVDILLDSAASGWNTVEREGISVRHPARFVLVGSGNPEEGELRPQLLDRFGMHAEIRTVKDPELRVKIVEQRTNFDQNPRRCIEDCQKTQNDLKEKIAEAQLLLSNITIDYDLRIKISQVCGELDVDGLRGDIVTNRAAKAYAAFNGQQNVKSSDIGKVITLCLRHRLRKDPLEAMDSGEKVQKVFNKIFEEEN</sequence>
<geneLocation type="chloroplast"/>
<keyword id="KW-0067">ATP-binding</keyword>
<keyword id="KW-0149">Chlorophyll biosynthesis</keyword>
<keyword id="KW-0150">Chloroplast</keyword>
<keyword id="KW-0436">Ligase</keyword>
<keyword id="KW-0547">Nucleotide-binding</keyword>
<keyword id="KW-0602">Photosynthesis</keyword>
<keyword id="KW-0934">Plastid</keyword>
<gene>
    <name type="primary">chlI</name>
</gene>
<proteinExistence type="inferred from homology"/>
<name>CHLI_PYRYE</name>
<accession>Q1XD93</accession>
<protein>
    <recommendedName>
        <fullName>Magnesium-chelatase subunit ChlI</fullName>
        <ecNumber>6.6.1.1</ecNumber>
    </recommendedName>
    <alternativeName>
        <fullName>Mg-protoporphyrin IX chelatase</fullName>
    </alternativeName>
</protein>
<evidence type="ECO:0000255" key="1"/>
<evidence type="ECO:0000305" key="2"/>
<organism>
    <name type="scientific">Pyropia yezoensis</name>
    <name type="common">Susabi-nori</name>
    <name type="synonym">Porphyra yezoensis</name>
    <dbReference type="NCBI Taxonomy" id="2788"/>
    <lineage>
        <taxon>Eukaryota</taxon>
        <taxon>Rhodophyta</taxon>
        <taxon>Bangiophyceae</taxon>
        <taxon>Bangiales</taxon>
        <taxon>Bangiaceae</taxon>
        <taxon>Pyropia</taxon>
    </lineage>
</organism>
<comment type="function">
    <text>Involved in chlorophyll biosynthesis; introduces a magnesium ion into protoporphyrin IX to yield Mg-protoporphyrin IX.</text>
</comment>
<comment type="catalytic activity">
    <reaction>
        <text>protoporphyrin IX + Mg(2+) + ATP + H2O = Mg-protoporphyrin IX + ADP + phosphate + 3 H(+)</text>
        <dbReference type="Rhea" id="RHEA:13961"/>
        <dbReference type="ChEBI" id="CHEBI:15377"/>
        <dbReference type="ChEBI" id="CHEBI:15378"/>
        <dbReference type="ChEBI" id="CHEBI:18420"/>
        <dbReference type="ChEBI" id="CHEBI:30616"/>
        <dbReference type="ChEBI" id="CHEBI:43474"/>
        <dbReference type="ChEBI" id="CHEBI:57306"/>
        <dbReference type="ChEBI" id="CHEBI:60492"/>
        <dbReference type="ChEBI" id="CHEBI:456216"/>
        <dbReference type="EC" id="6.6.1.1"/>
    </reaction>
</comment>
<comment type="pathway">
    <text>Porphyrin-containing compound metabolism; chlorophyll biosynthesis.</text>
</comment>
<comment type="subcellular location">
    <subcellularLocation>
        <location>Plastid</location>
        <location>Chloroplast</location>
    </subcellularLocation>
</comment>
<comment type="similarity">
    <text evidence="2">Belongs to the Mg-chelatase subunits D/I family.</text>
</comment>
<reference key="1">
    <citation type="submission" date="2003-11" db="EMBL/GenBank/DDBJ databases">
        <title>Whole genome sequence of Porphyra yezoensis chloroplast.</title>
        <authorList>
            <person name="Kunimoto M."/>
            <person name="Morishima K."/>
            <person name="Yoshikawa M."/>
            <person name="Fukuda S."/>
            <person name="Kobayashi T."/>
            <person name="Kobayashi M."/>
            <person name="Okazaki T."/>
            <person name="Ohara I."/>
            <person name="Nakayama I."/>
        </authorList>
    </citation>
    <scope>NUCLEOTIDE SEQUENCE [LARGE SCALE GENOMIC DNA]</scope>
    <source>
        <strain>U-51</strain>
    </source>
</reference>
<dbReference type="EC" id="6.6.1.1"/>
<dbReference type="EMBL" id="AP006715">
    <property type="protein sequence ID" value="BAE92518.1"/>
    <property type="molecule type" value="Genomic_DNA"/>
</dbReference>
<dbReference type="RefSeq" id="YP_537075.1">
    <property type="nucleotide sequence ID" value="NC_007932.1"/>
</dbReference>
<dbReference type="SMR" id="Q1XD93"/>
<dbReference type="GeneID" id="3978843"/>
<dbReference type="UniPathway" id="UPA00668"/>
<dbReference type="GO" id="GO:0009507">
    <property type="term" value="C:chloroplast"/>
    <property type="evidence" value="ECO:0007669"/>
    <property type="project" value="UniProtKB-SubCell"/>
</dbReference>
<dbReference type="GO" id="GO:0005524">
    <property type="term" value="F:ATP binding"/>
    <property type="evidence" value="ECO:0007669"/>
    <property type="project" value="UniProtKB-KW"/>
</dbReference>
<dbReference type="GO" id="GO:0016887">
    <property type="term" value="F:ATP hydrolysis activity"/>
    <property type="evidence" value="ECO:0007669"/>
    <property type="project" value="InterPro"/>
</dbReference>
<dbReference type="GO" id="GO:0016851">
    <property type="term" value="F:magnesium chelatase activity"/>
    <property type="evidence" value="ECO:0007669"/>
    <property type="project" value="UniProtKB-EC"/>
</dbReference>
<dbReference type="GO" id="GO:0015995">
    <property type="term" value="P:chlorophyll biosynthetic process"/>
    <property type="evidence" value="ECO:0007669"/>
    <property type="project" value="UniProtKB-UniPathway"/>
</dbReference>
<dbReference type="GO" id="GO:0015979">
    <property type="term" value="P:photosynthesis"/>
    <property type="evidence" value="ECO:0007669"/>
    <property type="project" value="UniProtKB-KW"/>
</dbReference>
<dbReference type="CDD" id="cd00009">
    <property type="entry name" value="AAA"/>
    <property type="match status" value="1"/>
</dbReference>
<dbReference type="FunFam" id="3.40.50.300:FF:000601">
    <property type="entry name" value="Mg-protoporphyrin IX chelatase"/>
    <property type="match status" value="1"/>
</dbReference>
<dbReference type="Gene3D" id="1.10.8.80">
    <property type="entry name" value="Magnesium chelatase subunit I, C-Terminal domain"/>
    <property type="match status" value="1"/>
</dbReference>
<dbReference type="Gene3D" id="3.40.50.300">
    <property type="entry name" value="P-loop containing nucleotide triphosphate hydrolases"/>
    <property type="match status" value="1"/>
</dbReference>
<dbReference type="InterPro" id="IPR003593">
    <property type="entry name" value="AAA+_ATPase"/>
</dbReference>
<dbReference type="InterPro" id="IPR045006">
    <property type="entry name" value="CHLI-like"/>
</dbReference>
<dbReference type="InterPro" id="IPR041628">
    <property type="entry name" value="ChlI/MoxR_AAA_lid"/>
</dbReference>
<dbReference type="InterPro" id="IPR011775">
    <property type="entry name" value="Mg_chelatase_ATPase-isu"/>
</dbReference>
<dbReference type="InterPro" id="IPR000523">
    <property type="entry name" value="Mg_chelatse_chII-like_cat_dom"/>
</dbReference>
<dbReference type="InterPro" id="IPR027417">
    <property type="entry name" value="P-loop_NTPase"/>
</dbReference>
<dbReference type="NCBIfam" id="TIGR02030">
    <property type="entry name" value="BchI-ChlI"/>
    <property type="match status" value="1"/>
</dbReference>
<dbReference type="PANTHER" id="PTHR32039">
    <property type="entry name" value="MAGNESIUM-CHELATASE SUBUNIT CHLI"/>
    <property type="match status" value="1"/>
</dbReference>
<dbReference type="PANTHER" id="PTHR32039:SF9">
    <property type="entry name" value="MAGNESIUM-CHELATASE SUBUNIT CHLI-2, CHLOROPLASTIC"/>
    <property type="match status" value="1"/>
</dbReference>
<dbReference type="Pfam" id="PF17863">
    <property type="entry name" value="AAA_lid_2"/>
    <property type="match status" value="1"/>
</dbReference>
<dbReference type="Pfam" id="PF01078">
    <property type="entry name" value="Mg_chelatase"/>
    <property type="match status" value="1"/>
</dbReference>
<dbReference type="SMART" id="SM00382">
    <property type="entry name" value="AAA"/>
    <property type="match status" value="1"/>
</dbReference>
<dbReference type="SUPFAM" id="SSF52540">
    <property type="entry name" value="P-loop containing nucleoside triphosphate hydrolases"/>
    <property type="match status" value="1"/>
</dbReference>
<feature type="chain" id="PRO_0000277297" description="Magnesium-chelatase subunit ChlI">
    <location>
        <begin position="1"/>
        <end position="355"/>
    </location>
</feature>
<feature type="binding site" evidence="1">
    <location>
        <begin position="47"/>
        <end position="54"/>
    </location>
    <ligand>
        <name>ATP</name>
        <dbReference type="ChEBI" id="CHEBI:30616"/>
    </ligand>
</feature>